<evidence type="ECO:0000255" key="1"/>
<evidence type="ECO:0000269" key="2">
    <source>
    </source>
</evidence>
<evidence type="ECO:0000303" key="3">
    <source>
    </source>
</evidence>
<evidence type="ECO:0000305" key="4"/>
<evidence type="ECO:0000305" key="5">
    <source>
    </source>
</evidence>
<evidence type="ECO:0000312" key="6">
    <source>
        <dbReference type="EMBL" id="WJJ70367.1"/>
    </source>
</evidence>
<reference key="1">
    <citation type="journal article" date="2023" name="Proc. Natl. Acad. Sci. U.S.A.">
        <title>Horizontal gene transfer underlies the painful stings of asp caterpillars (Lepidoptera: Megalopygidae).</title>
        <authorList>
            <person name="Walker A.A."/>
            <person name="Robinson S.D."/>
            <person name="Merritt D.J."/>
            <person name="Cardoso F.C."/>
            <person name="Goudarzi M.H."/>
            <person name="Mercedes R.S."/>
            <person name="Eagles D.A."/>
            <person name="Cooper P."/>
            <person name="Zdenek C.N."/>
            <person name="Fry B.G."/>
            <person name="Hall D.W."/>
            <person name="Vetter I."/>
            <person name="King G.F."/>
        </authorList>
    </citation>
    <scope>NUCLEOTIDE SEQUENCE [MRNA]</scope>
    <scope>MASS SPECTROMETRY</scope>
    <scope>RECOMBINANT EXPRESSION</scope>
    <scope>SUBCELLULAR LOCATION</scope>
    <scope>TISSUE SPECIFICITY</scope>
    <scope>DEVELOPMENTAL STAGE</scope>
    <source>
        <tissue>Venom</tissue>
    </source>
</reference>
<keyword id="KW-1015">Disulfide bond</keyword>
<keyword id="KW-0964">Secreted</keyword>
<keyword id="KW-0732">Signal</keyword>
<keyword id="KW-0800">Toxin</keyword>
<accession>P0DXW5</accession>
<protein>
    <recommendedName>
        <fullName evidence="3">U-megalopygitoxin(3)-Mo4</fullName>
        <shortName evidence="3">U-MPTX(3)-Mo4</shortName>
        <shortName evidence="6">U-MPTX.3-4</shortName>
    </recommendedName>
</protein>
<proteinExistence type="evidence at protein level"/>
<organism>
    <name type="scientific">Megalopyge opercularis</name>
    <name type="common">Southern flannel moth</name>
    <name type="synonym">Phalaena opercularis</name>
    <dbReference type="NCBI Taxonomy" id="1113279"/>
    <lineage>
        <taxon>Eukaryota</taxon>
        <taxon>Metazoa</taxon>
        <taxon>Ecdysozoa</taxon>
        <taxon>Arthropoda</taxon>
        <taxon>Hexapoda</taxon>
        <taxon>Insecta</taxon>
        <taxon>Pterygota</taxon>
        <taxon>Neoptera</taxon>
        <taxon>Endopterygota</taxon>
        <taxon>Lepidoptera</taxon>
        <taxon>Glossata</taxon>
        <taxon>Ditrysia</taxon>
        <taxon>Zygaenoidea</taxon>
        <taxon>Megalopygidae</taxon>
        <taxon>Megalopyge</taxon>
    </lineage>
</organism>
<dbReference type="EMBL" id="OP514849">
    <property type="protein sequence ID" value="WJJ70367.1"/>
    <property type="molecule type" value="mRNA"/>
</dbReference>
<dbReference type="GO" id="GO:0005576">
    <property type="term" value="C:extracellular region"/>
    <property type="evidence" value="ECO:0007669"/>
    <property type="project" value="UniProtKB-SubCell"/>
</dbReference>
<dbReference type="GO" id="GO:0090729">
    <property type="term" value="F:toxin activity"/>
    <property type="evidence" value="ECO:0007669"/>
    <property type="project" value="UniProtKB-KW"/>
</dbReference>
<dbReference type="CDD" id="cd00104">
    <property type="entry name" value="KAZAL_FS"/>
    <property type="match status" value="1"/>
</dbReference>
<dbReference type="Gene3D" id="3.30.60.30">
    <property type="match status" value="1"/>
</dbReference>
<dbReference type="InterPro" id="IPR002350">
    <property type="entry name" value="Kazal_dom"/>
</dbReference>
<dbReference type="InterPro" id="IPR036058">
    <property type="entry name" value="Kazal_dom_sf"/>
</dbReference>
<dbReference type="Pfam" id="PF07648">
    <property type="entry name" value="Kazal_2"/>
    <property type="match status" value="1"/>
</dbReference>
<dbReference type="SUPFAM" id="SSF100895">
    <property type="entry name" value="Kazal-type serine protease inhibitors"/>
    <property type="match status" value="1"/>
</dbReference>
<comment type="function">
    <text evidence="4">Probable toxin.</text>
</comment>
<comment type="subcellular location">
    <subcellularLocation>
        <location evidence="2">Secreted</location>
    </subcellularLocation>
</comment>
<comment type="tissue specificity">
    <text evidence="2">Expressed by the venom apparatus.</text>
</comment>
<comment type="developmental stage">
    <text evidence="2">Larvae.</text>
</comment>
<comment type="PTM">
    <text evidence="5">Contains 3 disulfide bonds.</text>
</comment>
<comment type="mass spectrometry">
    <text>Monoisotopic mass.</text>
</comment>
<comment type="similarity">
    <text evidence="4">Belongs to the caterpillar 3 family.</text>
</comment>
<name>TXU34_MEGOP</name>
<sequence>MNSKFVLIVVFLAVVSICFANEVWDPEKCGCPPFDKVENAVCTKDRATYDNRCQFDCHAKFLSKSGKTLEESPCIESADPK</sequence>
<feature type="signal peptide" evidence="1">
    <location>
        <begin position="1"/>
        <end position="20"/>
    </location>
</feature>
<feature type="chain" id="PRO_0000461523" description="U-megalopygitoxin(3)-Mo4" evidence="5">
    <location>
        <begin position="21"/>
        <end position="81"/>
    </location>
</feature>